<name>MPK15_ORYSJ</name>
<organism>
    <name type="scientific">Oryza sativa subsp. japonica</name>
    <name type="common">Rice</name>
    <dbReference type="NCBI Taxonomy" id="39947"/>
    <lineage>
        <taxon>Eukaryota</taxon>
        <taxon>Viridiplantae</taxon>
        <taxon>Streptophyta</taxon>
        <taxon>Embryophyta</taxon>
        <taxon>Tracheophyta</taxon>
        <taxon>Spermatophyta</taxon>
        <taxon>Magnoliopsida</taxon>
        <taxon>Liliopsida</taxon>
        <taxon>Poales</taxon>
        <taxon>Poaceae</taxon>
        <taxon>BOP clade</taxon>
        <taxon>Oryzoideae</taxon>
        <taxon>Oryzeae</taxon>
        <taxon>Oryzinae</taxon>
        <taxon>Oryza</taxon>
        <taxon>Oryza sativa</taxon>
    </lineage>
</organism>
<feature type="chain" id="PRO_0000239758" description="Mitogen-activated protein kinase 15">
    <location>
        <begin position="1"/>
        <end position="498"/>
    </location>
</feature>
<feature type="domain" description="Protein kinase" evidence="2">
    <location>
        <begin position="13"/>
        <end position="304"/>
    </location>
</feature>
<feature type="region of interest" description="Disordered" evidence="3">
    <location>
        <begin position="388"/>
        <end position="411"/>
    </location>
</feature>
<feature type="region of interest" description="Disordered" evidence="3">
    <location>
        <begin position="470"/>
        <end position="498"/>
    </location>
</feature>
<feature type="short sequence motif" description="TXY">
    <location>
        <begin position="175"/>
        <end position="177"/>
    </location>
</feature>
<feature type="compositionally biased region" description="Polar residues" evidence="3">
    <location>
        <begin position="486"/>
        <end position="498"/>
    </location>
</feature>
<feature type="active site" description="Proton acceptor" evidence="2">
    <location>
        <position position="139"/>
    </location>
</feature>
<feature type="binding site" evidence="2">
    <location>
        <begin position="19"/>
        <end position="27"/>
    </location>
    <ligand>
        <name>ATP</name>
        <dbReference type="ChEBI" id="CHEBI:30616"/>
    </ligand>
</feature>
<feature type="binding site" evidence="2">
    <location>
        <position position="42"/>
    </location>
    <ligand>
        <name>ATP</name>
        <dbReference type="ChEBI" id="CHEBI:30616"/>
    </ligand>
</feature>
<feature type="modified residue" description="Phosphothreonine" evidence="1">
    <location>
        <position position="175"/>
    </location>
</feature>
<feature type="modified residue" description="Phosphotyrosine" evidence="1">
    <location>
        <position position="177"/>
    </location>
</feature>
<evidence type="ECO:0000250" key="1"/>
<evidence type="ECO:0000255" key="2">
    <source>
        <dbReference type="PROSITE-ProRule" id="PRU00159"/>
    </source>
</evidence>
<evidence type="ECO:0000256" key="3">
    <source>
        <dbReference type="SAM" id="MobiDB-lite"/>
    </source>
</evidence>
<evidence type="ECO:0000269" key="4">
    <source>
    </source>
</evidence>
<evidence type="ECO:0000305" key="5"/>
<gene>
    <name type="primary">MPK15</name>
    <name type="ordered locus">Os11g0271100</name>
    <name type="ordered locus">LOC_Os11g17080</name>
</gene>
<dbReference type="EC" id="2.7.11.24"/>
<dbReference type="EMBL" id="AC135497">
    <property type="protein sequence ID" value="AAX94956.1"/>
    <property type="molecule type" value="Genomic_DNA"/>
</dbReference>
<dbReference type="EMBL" id="DP000010">
    <property type="protein sequence ID" value="ABA92667.1"/>
    <property type="molecule type" value="Genomic_DNA"/>
</dbReference>
<dbReference type="EMBL" id="AP014967">
    <property type="protein sequence ID" value="BAT13563.1"/>
    <property type="molecule type" value="Genomic_DNA"/>
</dbReference>
<dbReference type="EMBL" id="AK068981">
    <property type="protein sequence ID" value="BAG91195.1"/>
    <property type="molecule type" value="mRNA"/>
</dbReference>
<dbReference type="RefSeq" id="XP_015615372.1">
    <property type="nucleotide sequence ID" value="XM_015759886.1"/>
</dbReference>
<dbReference type="SMR" id="Q53N72"/>
<dbReference type="FunCoup" id="Q53N72">
    <property type="interactions" value="468"/>
</dbReference>
<dbReference type="STRING" id="39947.Q53N72"/>
<dbReference type="PaxDb" id="39947-Q53N72"/>
<dbReference type="EnsemblPlants" id="Os11t0271100-01">
    <property type="protein sequence ID" value="Os11t0271100-01"/>
    <property type="gene ID" value="Os11g0271100"/>
</dbReference>
<dbReference type="Gramene" id="Os11t0271100-01">
    <property type="protein sequence ID" value="Os11t0271100-01"/>
    <property type="gene ID" value="Os11g0271100"/>
</dbReference>
<dbReference type="eggNOG" id="KOG0660">
    <property type="taxonomic scope" value="Eukaryota"/>
</dbReference>
<dbReference type="HOGENOM" id="CLU_000288_181_5_1"/>
<dbReference type="InParanoid" id="Q53N72"/>
<dbReference type="OMA" id="AEPTSFM"/>
<dbReference type="OrthoDB" id="2396at2759"/>
<dbReference type="Proteomes" id="UP000000763">
    <property type="component" value="Chromosome 11"/>
</dbReference>
<dbReference type="Proteomes" id="UP000059680">
    <property type="component" value="Chromosome 11"/>
</dbReference>
<dbReference type="GO" id="GO:0005737">
    <property type="term" value="C:cytoplasm"/>
    <property type="evidence" value="ECO:0000318"/>
    <property type="project" value="GO_Central"/>
</dbReference>
<dbReference type="GO" id="GO:0005634">
    <property type="term" value="C:nucleus"/>
    <property type="evidence" value="ECO:0000318"/>
    <property type="project" value="GO_Central"/>
</dbReference>
<dbReference type="GO" id="GO:0005524">
    <property type="term" value="F:ATP binding"/>
    <property type="evidence" value="ECO:0007669"/>
    <property type="project" value="UniProtKB-KW"/>
</dbReference>
<dbReference type="GO" id="GO:0004707">
    <property type="term" value="F:MAP kinase activity"/>
    <property type="evidence" value="ECO:0007669"/>
    <property type="project" value="UniProtKB-EC"/>
</dbReference>
<dbReference type="GO" id="GO:0106310">
    <property type="term" value="F:protein serine kinase activity"/>
    <property type="evidence" value="ECO:0007669"/>
    <property type="project" value="RHEA"/>
</dbReference>
<dbReference type="GO" id="GO:0004674">
    <property type="term" value="F:protein serine/threonine kinase activity"/>
    <property type="evidence" value="ECO:0000318"/>
    <property type="project" value="GO_Central"/>
</dbReference>
<dbReference type="GO" id="GO:0035556">
    <property type="term" value="P:intracellular signal transduction"/>
    <property type="evidence" value="ECO:0000318"/>
    <property type="project" value="GO_Central"/>
</dbReference>
<dbReference type="CDD" id="cd07859">
    <property type="entry name" value="STKc_TDY_MAPK"/>
    <property type="match status" value="1"/>
</dbReference>
<dbReference type="FunFam" id="1.10.510.10:FF:000017">
    <property type="entry name" value="Mitogen-activated protein kinase"/>
    <property type="match status" value="1"/>
</dbReference>
<dbReference type="FunFam" id="3.30.200.20:FF:000046">
    <property type="entry name" value="Mitogen-activated protein kinase"/>
    <property type="match status" value="1"/>
</dbReference>
<dbReference type="Gene3D" id="3.30.200.20">
    <property type="entry name" value="Phosphorylase Kinase, domain 1"/>
    <property type="match status" value="1"/>
</dbReference>
<dbReference type="Gene3D" id="1.10.510.10">
    <property type="entry name" value="Transferase(Phosphotransferase) domain 1"/>
    <property type="match status" value="1"/>
</dbReference>
<dbReference type="InterPro" id="IPR011009">
    <property type="entry name" value="Kinase-like_dom_sf"/>
</dbReference>
<dbReference type="InterPro" id="IPR050117">
    <property type="entry name" value="MAP_kinase"/>
</dbReference>
<dbReference type="InterPro" id="IPR003527">
    <property type="entry name" value="MAP_kinase_CS"/>
</dbReference>
<dbReference type="InterPro" id="IPR000719">
    <property type="entry name" value="Prot_kinase_dom"/>
</dbReference>
<dbReference type="InterPro" id="IPR017441">
    <property type="entry name" value="Protein_kinase_ATP_BS"/>
</dbReference>
<dbReference type="PANTHER" id="PTHR24055">
    <property type="entry name" value="MITOGEN-ACTIVATED PROTEIN KINASE"/>
    <property type="match status" value="1"/>
</dbReference>
<dbReference type="Pfam" id="PF00069">
    <property type="entry name" value="Pkinase"/>
    <property type="match status" value="1"/>
</dbReference>
<dbReference type="SMART" id="SM00220">
    <property type="entry name" value="S_TKc"/>
    <property type="match status" value="1"/>
</dbReference>
<dbReference type="SUPFAM" id="SSF56112">
    <property type="entry name" value="Protein kinase-like (PK-like)"/>
    <property type="match status" value="1"/>
</dbReference>
<dbReference type="PROSITE" id="PS01351">
    <property type="entry name" value="MAPK"/>
    <property type="match status" value="1"/>
</dbReference>
<dbReference type="PROSITE" id="PS00107">
    <property type="entry name" value="PROTEIN_KINASE_ATP"/>
    <property type="match status" value="1"/>
</dbReference>
<dbReference type="PROSITE" id="PS50011">
    <property type="entry name" value="PROTEIN_KINASE_DOM"/>
    <property type="match status" value="1"/>
</dbReference>
<comment type="catalytic activity">
    <reaction>
        <text>L-seryl-[protein] + ATP = O-phospho-L-seryl-[protein] + ADP + H(+)</text>
        <dbReference type="Rhea" id="RHEA:17989"/>
        <dbReference type="Rhea" id="RHEA-COMP:9863"/>
        <dbReference type="Rhea" id="RHEA-COMP:11604"/>
        <dbReference type="ChEBI" id="CHEBI:15378"/>
        <dbReference type="ChEBI" id="CHEBI:29999"/>
        <dbReference type="ChEBI" id="CHEBI:30616"/>
        <dbReference type="ChEBI" id="CHEBI:83421"/>
        <dbReference type="ChEBI" id="CHEBI:456216"/>
        <dbReference type="EC" id="2.7.11.24"/>
    </reaction>
</comment>
<comment type="catalytic activity">
    <reaction>
        <text>L-threonyl-[protein] + ATP = O-phospho-L-threonyl-[protein] + ADP + H(+)</text>
        <dbReference type="Rhea" id="RHEA:46608"/>
        <dbReference type="Rhea" id="RHEA-COMP:11060"/>
        <dbReference type="Rhea" id="RHEA-COMP:11605"/>
        <dbReference type="ChEBI" id="CHEBI:15378"/>
        <dbReference type="ChEBI" id="CHEBI:30013"/>
        <dbReference type="ChEBI" id="CHEBI:30616"/>
        <dbReference type="ChEBI" id="CHEBI:61977"/>
        <dbReference type="ChEBI" id="CHEBI:456216"/>
        <dbReference type="EC" id="2.7.11.24"/>
    </reaction>
</comment>
<comment type="activity regulation">
    <text evidence="1">Activated by threonine and tyrosine phosphorylation.</text>
</comment>
<comment type="induction">
    <text evidence="4">By jasmonic acid (JA) and infection with rice blast fungus (M.grisea).</text>
</comment>
<comment type="domain">
    <text>The TXY motif contains the threonine and tyrosine residues whose phosphorylation activates the MAP kinases.</text>
</comment>
<comment type="PTM">
    <text evidence="1">Dually phosphorylated on Thr-175 and Tyr-177, which activates the enzyme.</text>
</comment>
<comment type="similarity">
    <text evidence="5">Belongs to the protein kinase superfamily. CMGC Ser/Thr protein kinase family. MAP kinase subfamily.</text>
</comment>
<proteinExistence type="evidence at transcript level"/>
<accession>Q53N72</accession>
<accession>B7EFP8</accession>
<reference key="1">
    <citation type="journal article" date="2005" name="BMC Biol.">
        <title>The sequence of rice chromosomes 11 and 12, rich in disease resistance genes and recent gene duplications.</title>
        <authorList>
            <consortium name="The rice chromosomes 11 and 12 sequencing consortia"/>
        </authorList>
    </citation>
    <scope>NUCLEOTIDE SEQUENCE [LARGE SCALE GENOMIC DNA]</scope>
    <source>
        <strain>cv. Nipponbare</strain>
    </source>
</reference>
<reference key="2">
    <citation type="journal article" date="2005" name="Nature">
        <title>The map-based sequence of the rice genome.</title>
        <authorList>
            <consortium name="International rice genome sequencing project (IRGSP)"/>
        </authorList>
    </citation>
    <scope>NUCLEOTIDE SEQUENCE [LARGE SCALE GENOMIC DNA]</scope>
    <source>
        <strain>cv. Nipponbare</strain>
    </source>
</reference>
<reference key="3">
    <citation type="journal article" date="2013" name="Rice">
        <title>Improvement of the Oryza sativa Nipponbare reference genome using next generation sequence and optical map data.</title>
        <authorList>
            <person name="Kawahara Y."/>
            <person name="de la Bastide M."/>
            <person name="Hamilton J.P."/>
            <person name="Kanamori H."/>
            <person name="McCombie W.R."/>
            <person name="Ouyang S."/>
            <person name="Schwartz D.C."/>
            <person name="Tanaka T."/>
            <person name="Wu J."/>
            <person name="Zhou S."/>
            <person name="Childs K.L."/>
            <person name="Davidson R.M."/>
            <person name="Lin H."/>
            <person name="Quesada-Ocampo L."/>
            <person name="Vaillancourt B."/>
            <person name="Sakai H."/>
            <person name="Lee S.S."/>
            <person name="Kim J."/>
            <person name="Numa H."/>
            <person name="Itoh T."/>
            <person name="Buell C.R."/>
            <person name="Matsumoto T."/>
        </authorList>
    </citation>
    <scope>GENOME REANNOTATION</scope>
    <source>
        <strain>cv. Nipponbare</strain>
    </source>
</reference>
<reference key="4">
    <citation type="journal article" date="2003" name="Science">
        <title>Collection, mapping, and annotation of over 28,000 cDNA clones from japonica rice.</title>
        <authorList>
            <consortium name="The rice full-length cDNA consortium"/>
        </authorList>
    </citation>
    <scope>NUCLEOTIDE SEQUENCE [LARGE SCALE MRNA]</scope>
    <source>
        <strain>cv. Nipponbare</strain>
    </source>
</reference>
<reference key="5">
    <citation type="journal article" date="2006" name="Mol. Plant Microbe Interact.">
        <title>Molecular analysis of the rice MAP kinase gene family in relation to Magnaporthe grisea infection.</title>
        <authorList>
            <person name="Reyna N.S."/>
            <person name="Yang Y."/>
        </authorList>
    </citation>
    <scope>INDUCTION</scope>
    <scope>NOMENCLATURE</scope>
</reference>
<protein>
    <recommendedName>
        <fullName>Mitogen-activated protein kinase 15</fullName>
        <shortName>MAP kinase 15</shortName>
        <ecNumber>2.7.11.24</ecNumber>
    </recommendedName>
</protein>
<keyword id="KW-0067">ATP-binding</keyword>
<keyword id="KW-0418">Kinase</keyword>
<keyword id="KW-0547">Nucleotide-binding</keyword>
<keyword id="KW-0597">Phosphoprotein</keyword>
<keyword id="KW-1185">Reference proteome</keyword>
<keyword id="KW-0723">Serine/threonine-protein kinase</keyword>
<keyword id="KW-0808">Transferase</keyword>
<sequence>MDFFTEYGEGNRYKIEEVIGKGSYGVVCSALDTHTGEKVAIKKINDIFEHVSDATRILREIKLLRLLRHPDIVEIKHILLPPSRREFKDIYVVFELMESDLHQVIKANDDLTPEHYQFFLYQLLRGLKYIHTANVFHRDLKPKNILANADCKLKICDFGLARVAFSDTPTAIFWTDYVATRWYRAPELCGSFFSKYTPAIDIWSIGCIFAELLTGKPLFPGKNVVHQLDIITDLLGTPSTEAISRIRNEKARRYLSSMRRKKPIPFTQKFPNADPLALRLLERMLSFEPKDRPNAEEALADPYFRNIANVDREPSAQPVTKLEFEFERRRITKEDIRELIYRDILEYHPNMLREYLEGTESAGFMYPSAVDHFKKQFAYLEEHYAKGSTAAPPERQHNSLPRPSVLYSDDRPQNTANIAEDLSKCVLGDNTQKMHQGSASVCANRVPQGGAARPGKVVGSALRYGNCSTSTAEQYEHRRTDRNPALATNTVSPRGSYP</sequence>